<reference key="1">
    <citation type="journal article" date="1994" name="Science">
        <title>Complete nucleotide sequence of Saccharomyces cerevisiae chromosome VIII.</title>
        <authorList>
            <person name="Johnston M."/>
            <person name="Andrews S."/>
            <person name="Brinkman R."/>
            <person name="Cooper J."/>
            <person name="Ding H."/>
            <person name="Dover J."/>
            <person name="Du Z."/>
            <person name="Favello A."/>
            <person name="Fulton L."/>
            <person name="Gattung S."/>
            <person name="Geisel C."/>
            <person name="Kirsten J."/>
            <person name="Kucaba T."/>
            <person name="Hillier L.W."/>
            <person name="Jier M."/>
            <person name="Johnston L."/>
            <person name="Langston Y."/>
            <person name="Latreille P."/>
            <person name="Louis E.J."/>
            <person name="Macri C."/>
            <person name="Mardis E."/>
            <person name="Menezes S."/>
            <person name="Mouser L."/>
            <person name="Nhan M."/>
            <person name="Rifkin L."/>
            <person name="Riles L."/>
            <person name="St Peter H."/>
            <person name="Trevaskis E."/>
            <person name="Vaughan K."/>
            <person name="Vignati D."/>
            <person name="Wilcox L."/>
            <person name="Wohldman P."/>
            <person name="Waterston R."/>
            <person name="Wilson R."/>
            <person name="Vaudin M."/>
        </authorList>
    </citation>
    <scope>NUCLEOTIDE SEQUENCE [LARGE SCALE GENOMIC DNA]</scope>
    <source>
        <strain>ATCC 204508 / S288c</strain>
    </source>
</reference>
<reference key="2">
    <citation type="journal article" date="2014" name="G3 (Bethesda)">
        <title>The reference genome sequence of Saccharomyces cerevisiae: Then and now.</title>
        <authorList>
            <person name="Engel S.R."/>
            <person name="Dietrich F.S."/>
            <person name="Fisk D.G."/>
            <person name="Binkley G."/>
            <person name="Balakrishnan R."/>
            <person name="Costanzo M.C."/>
            <person name="Dwight S.S."/>
            <person name="Hitz B.C."/>
            <person name="Karra K."/>
            <person name="Nash R.S."/>
            <person name="Weng S."/>
            <person name="Wong E.D."/>
            <person name="Lloyd P."/>
            <person name="Skrzypek M.S."/>
            <person name="Miyasato S.R."/>
            <person name="Simison M."/>
            <person name="Cherry J.M."/>
        </authorList>
    </citation>
    <scope>GENOME REANNOTATION</scope>
    <scope>SEQUENCE REVISION TO 762</scope>
    <source>
        <strain>ATCC 204508 / S288c</strain>
    </source>
</reference>
<reference key="3">
    <citation type="journal article" date="2001" name="Mol. Cell">
        <title>Identification of a 60S preribosomal particle that is closely linked to nuclear export.</title>
        <authorList>
            <person name="Bassler J."/>
            <person name="Grandi P."/>
            <person name="Gadal O."/>
            <person name="Lessmann T."/>
            <person name="Petfalski E."/>
            <person name="Tollervey D."/>
            <person name="Lechner J."/>
            <person name="Hurt E."/>
        </authorList>
    </citation>
    <scope>INTERACTION WITH NUG1</scope>
</reference>
<reference key="4">
    <citation type="journal article" date="2001" name="Mol. Cell. Biol.">
        <title>Nuclear export of 60s ribosomal subunits depends on Xpo1p and requires a nuclear export sequence-containing factor, Nmd3p, that associates with the large subunit protein Rpl10p.</title>
        <authorList>
            <person name="Gadal O."/>
            <person name="Strauss D."/>
            <person name="Kessl J."/>
            <person name="Trumpower B."/>
            <person name="Tollervey D."/>
            <person name="Hurt E."/>
        </authorList>
    </citation>
    <scope>FUNCTION</scope>
</reference>
<reference key="5">
    <citation type="journal article" date="2003" name="Mol. Cell">
        <title>Assigning function to yeast proteins by integration of technologies.</title>
        <authorList>
            <person name="Hazbun T.R."/>
            <person name="Malmstroem L."/>
            <person name="Anderson S."/>
            <person name="Graczyk B.J."/>
            <person name="Fox B."/>
            <person name="Riffle M."/>
            <person name="Sundin B.A."/>
            <person name="Aranda J.D."/>
            <person name="McDonald W.H."/>
            <person name="Chiu C.-H."/>
            <person name="Snydsman B.E."/>
            <person name="Bradley P."/>
            <person name="Muller E.G.D."/>
            <person name="Fields S."/>
            <person name="Baker D."/>
            <person name="Yates J.R. III"/>
            <person name="Davis T.N."/>
        </authorList>
    </citation>
    <scope>IDENTIFICATION IN THE RIX1 COMPLEX</scope>
    <scope>IDENTIFICATION BY MASS SPECTROMETRY</scope>
    <scope>INTERACTION WITH IPI3</scope>
</reference>
<reference key="6">
    <citation type="journal article" date="2003" name="Nature">
        <title>Global analysis of protein localization in budding yeast.</title>
        <authorList>
            <person name="Huh W.-K."/>
            <person name="Falvo J.V."/>
            <person name="Gerke L.C."/>
            <person name="Carroll A.S."/>
            <person name="Howson R.W."/>
            <person name="Weissman J.S."/>
            <person name="O'Shea E.K."/>
        </authorList>
    </citation>
    <scope>SUBCELLULAR LOCATION [LARGE SCALE ANALYSIS]</scope>
</reference>
<reference key="7">
    <citation type="journal article" date="2003" name="Nature">
        <title>Global analysis of protein expression in yeast.</title>
        <authorList>
            <person name="Ghaemmaghami S."/>
            <person name="Huh W.-K."/>
            <person name="Bower K."/>
            <person name="Howson R.W."/>
            <person name="Belle A."/>
            <person name="Dephoure N."/>
            <person name="O'Shea E.K."/>
            <person name="Weissman J.S."/>
        </authorList>
    </citation>
    <scope>LEVEL OF PROTEIN EXPRESSION [LARGE SCALE ANALYSIS]</scope>
</reference>
<reference key="8">
    <citation type="journal article" date="2004" name="J. Biol. Chem.">
        <title>Rea1, a dynein-related nuclear AAA-ATPase, is involved in late rRNA processing and nuclear export of 60 S subunits.</title>
        <authorList>
            <person name="Galani K."/>
            <person name="Nissan T.A."/>
            <person name="Petfalski E."/>
            <person name="Tollervey D."/>
            <person name="Hurt E."/>
        </authorList>
    </citation>
    <scope>IDENTIFICATION IN THE RIX1 COMPLEX</scope>
    <scope>SUBCELLULAR LOCATION</scope>
    <scope>FUNCTION OF THE RIX1 COMPLEX</scope>
    <scope>IDENTIFICATION BY MASS SPECTROMETRY</scope>
</reference>
<reference key="9">
    <citation type="journal article" date="2004" name="Mol. Cell">
        <title>A pre-ribosome with a tadpole-like structure functions in ATP-dependent maturation of 60S subunits.</title>
        <authorList>
            <person name="Nissan T.A."/>
            <person name="Galani K."/>
            <person name="Maco B."/>
            <person name="Tollervey D."/>
            <person name="Aebi U."/>
            <person name="Hurt E."/>
        </authorList>
    </citation>
    <scope>IDENTIFICATION IN THE RIX1 COMPLEX</scope>
    <scope>INTERACTION WITH MDN1 AND PRE-60S RIBOSOMAL PARTICLES</scope>
    <scope>IDENTIFICATION BY MASS SPECTROMETRY</scope>
</reference>
<reference key="10">
    <citation type="journal article" date="2004" name="Mol. Cell">
        <title>High-definition macromolecular composition of yeast RNA-processing complexes.</title>
        <authorList>
            <person name="Krogan N.J."/>
            <person name="Peng W.-T."/>
            <person name="Cagney G."/>
            <person name="Robinson M.D."/>
            <person name="Haw R."/>
            <person name="Zhong G."/>
            <person name="Guo X."/>
            <person name="Zhang X."/>
            <person name="Canadien V."/>
            <person name="Richards D.P."/>
            <person name="Beattie B.K."/>
            <person name="Lalev A."/>
            <person name="Zhang W."/>
            <person name="Davierwala A.P."/>
            <person name="Mnaimneh S."/>
            <person name="Starostine A."/>
            <person name="Tikuisis A.P."/>
            <person name="Grigull J."/>
            <person name="Datta N."/>
            <person name="Bray J.E."/>
            <person name="Hughes T.R."/>
            <person name="Emili A."/>
            <person name="Greenblatt J.F."/>
        </authorList>
    </citation>
    <scope>IDENTIFICATION IN THE RIX1 COMPLEX</scope>
    <scope>FUNCTION OF THE RIX1 COMPLEX</scope>
</reference>
<reference key="11">
    <citation type="journal article" date="2006" name="Traffic">
        <title>Formation and nuclear export of preribosomes are functionally linked to the small-ubiquitin-related modifier pathway.</title>
        <authorList>
            <person name="Panse V.G."/>
            <person name="Kressler D."/>
            <person name="Pauli A."/>
            <person name="Petfalski E."/>
            <person name="Gnaedig M."/>
            <person name="Tollervey D."/>
            <person name="Hurt E."/>
        </authorList>
    </citation>
    <scope>SUMOYLATION</scope>
</reference>
<reference key="12">
    <citation type="journal article" date="2012" name="Proc. Natl. Acad. Sci. U.S.A.">
        <title>N-terminal acetylome analyses and functional insights of the N-terminal acetyltransferase NatB.</title>
        <authorList>
            <person name="Van Damme P."/>
            <person name="Lasa M."/>
            <person name="Polevoda B."/>
            <person name="Gazquez C."/>
            <person name="Elosegui-Artola A."/>
            <person name="Kim D.S."/>
            <person name="De Juan-Pardo E."/>
            <person name="Demeyer K."/>
            <person name="Hole K."/>
            <person name="Larrea E."/>
            <person name="Timmerman E."/>
            <person name="Prieto J."/>
            <person name="Arnesen T."/>
            <person name="Sherman F."/>
            <person name="Gevaert K."/>
            <person name="Aldabe R."/>
        </authorList>
    </citation>
    <scope>ACETYLATION [LARGE SCALE ANALYSIS] AT SER-2</scope>
    <scope>CLEAVAGE OF INITIATOR METHIONINE [LARGE SCALE ANALYSIS]</scope>
    <scope>IDENTIFICATION BY MASS SPECTROMETRY [LARGE SCALE ANALYSIS]</scope>
</reference>
<reference key="13">
    <citation type="journal article" date="2016" name="Nat. Struct. Mol. Biol.">
        <title>Architecture of the Rix1-Rea1 checkpoint machinery during pre-60S-ribosome remodeling.</title>
        <authorList>
            <person name="Barrio-Garcia C."/>
            <person name="Thoms M."/>
            <person name="Flemming D."/>
            <person name="Kater L."/>
            <person name="Berninghausen O."/>
            <person name="Bassler J."/>
            <person name="Beckmann R."/>
            <person name="Hurt E."/>
        </authorList>
    </citation>
    <scope>IDENTIFICATION IN THE RIX1 COMPLEX</scope>
    <scope>INTERACTION WITH MDN1 AND IPI3</scope>
</reference>
<comment type="function">
    <text evidence="2 7 9 11">Component of the RIX1 complex required for processing of ITS2 sequences from 35S pre-rRNA and the nucleoplasmic transit of the pre-60S ribosomal subunits (PubMed:11313466, PubMed:14759368, PubMed:15528184, PubMed:26619264). Regulates pre-60S association of the critical remodeling factor MDN1 (PubMed:26619264).</text>
</comment>
<comment type="subunit">
    <text evidence="3 6 7 8 9 11">Component of the RIX1 complex, composed of IPI1, RIX1/IPI2 and IPI3 in a 1:2:2 stoichiometry. The complex interacts (via RIX1) with MDN1 (via its hexameric AAA ATPase ring) and the pre-60S ribosome particles (PubMed:14690591, PubMed:14759368, PubMed:15260980, PubMed:15528184, PubMed:26619264). Interacts with NUG1 (PubMed:11583615). Interacts with IPI3 (PubMed:14690591).</text>
</comment>
<comment type="interaction">
    <interactant intactId="EBI-24899">
        <id>P38883</id>
    </interactant>
    <interactant intactId="EBI-29063">
        <id>P53877</id>
        <label>IPI3</label>
    </interactant>
    <organismsDiffer>false</organismsDiffer>
    <experiments>9</experiments>
</comment>
<comment type="subcellular location">
    <subcellularLocation>
        <location evidence="4 9">Nucleus</location>
    </subcellularLocation>
</comment>
<comment type="PTM">
    <text evidence="10">Sumoylated.</text>
</comment>
<comment type="miscellaneous">
    <text evidence="5">Present with 7820 molecules/cell in log phase SD medium.</text>
</comment>
<comment type="similarity">
    <text evidence="12">Belongs to the RIX1/PELP1 family.</text>
</comment>
<evidence type="ECO:0000256" key="1">
    <source>
        <dbReference type="SAM" id="MobiDB-lite"/>
    </source>
</evidence>
<evidence type="ECO:0000269" key="2">
    <source>
    </source>
</evidence>
<evidence type="ECO:0000269" key="3">
    <source>
    </source>
</evidence>
<evidence type="ECO:0000269" key="4">
    <source>
    </source>
</evidence>
<evidence type="ECO:0000269" key="5">
    <source>
    </source>
</evidence>
<evidence type="ECO:0000269" key="6">
    <source>
    </source>
</evidence>
<evidence type="ECO:0000269" key="7">
    <source>
    </source>
</evidence>
<evidence type="ECO:0000269" key="8">
    <source>
    </source>
</evidence>
<evidence type="ECO:0000269" key="9">
    <source>
    </source>
</evidence>
<evidence type="ECO:0000269" key="10">
    <source>
    </source>
</evidence>
<evidence type="ECO:0000269" key="11">
    <source>
    </source>
</evidence>
<evidence type="ECO:0000305" key="12"/>
<evidence type="ECO:0007744" key="13">
    <source>
    </source>
</evidence>
<evidence type="ECO:0007829" key="14">
    <source>
        <dbReference type="PDB" id="6YLE"/>
    </source>
</evidence>
<name>RIX1_YEAST</name>
<proteinExistence type="evidence at protein level"/>
<organism>
    <name type="scientific">Saccharomyces cerevisiae (strain ATCC 204508 / S288c)</name>
    <name type="common">Baker's yeast</name>
    <dbReference type="NCBI Taxonomy" id="559292"/>
    <lineage>
        <taxon>Eukaryota</taxon>
        <taxon>Fungi</taxon>
        <taxon>Dikarya</taxon>
        <taxon>Ascomycota</taxon>
        <taxon>Saccharomycotina</taxon>
        <taxon>Saccharomycetes</taxon>
        <taxon>Saccharomycetales</taxon>
        <taxon>Saccharomycetaceae</taxon>
        <taxon>Saccharomyces</taxon>
    </lineage>
</organism>
<dbReference type="EMBL" id="U00030">
    <property type="protein sequence ID" value="AAB68356.1"/>
    <property type="molecule type" value="Genomic_DNA"/>
</dbReference>
<dbReference type="EMBL" id="BK006934">
    <property type="protein sequence ID" value="DAA06889.2"/>
    <property type="molecule type" value="Genomic_DNA"/>
</dbReference>
<dbReference type="PIR" id="S46678">
    <property type="entry name" value="S46678"/>
</dbReference>
<dbReference type="RefSeq" id="NP_012067.4">
    <property type="nucleotide sequence ID" value="NM_001179328.4"/>
</dbReference>
<dbReference type="PDB" id="6YLE">
    <property type="method" value="EM"/>
    <property type="resolution" value="3.30 A"/>
    <property type="chains" value="C/D=1-763"/>
</dbReference>
<dbReference type="PDB" id="6YLH">
    <property type="method" value="EM"/>
    <property type="resolution" value="3.10 A"/>
    <property type="chains" value="6/7=1-763"/>
</dbReference>
<dbReference type="PDBsum" id="6YLE"/>
<dbReference type="PDBsum" id="6YLH"/>
<dbReference type="EMDB" id="EMD-10836"/>
<dbReference type="EMDB" id="EMD-10839"/>
<dbReference type="SMR" id="P38883"/>
<dbReference type="BioGRID" id="36631">
    <property type="interactions" value="275"/>
</dbReference>
<dbReference type="ComplexPortal" id="CPX-1711">
    <property type="entry name" value="RIX1 complex"/>
</dbReference>
<dbReference type="DIP" id="DIP-804N"/>
<dbReference type="FunCoup" id="P38883">
    <property type="interactions" value="396"/>
</dbReference>
<dbReference type="IntAct" id="P38883">
    <property type="interactions" value="66"/>
</dbReference>
<dbReference type="MINT" id="P38883"/>
<dbReference type="STRING" id="4932.YHR197W"/>
<dbReference type="iPTMnet" id="P38883"/>
<dbReference type="PaxDb" id="4932-YHR197W"/>
<dbReference type="PeptideAtlas" id="P38883"/>
<dbReference type="EnsemblFungi" id="YHR197W_mRNA">
    <property type="protein sequence ID" value="YHR197W"/>
    <property type="gene ID" value="YHR197W"/>
</dbReference>
<dbReference type="GeneID" id="856604"/>
<dbReference type="KEGG" id="sce:YHR197W"/>
<dbReference type="AGR" id="SGD:S000001240"/>
<dbReference type="SGD" id="S000001240">
    <property type="gene designation" value="RIX1"/>
</dbReference>
<dbReference type="VEuPathDB" id="FungiDB:YHR197W"/>
<dbReference type="eggNOG" id="ENOG502R65X">
    <property type="taxonomic scope" value="Eukaryota"/>
</dbReference>
<dbReference type="HOGENOM" id="CLU_020084_0_0_1"/>
<dbReference type="InParanoid" id="P38883"/>
<dbReference type="OMA" id="WCGINLI"/>
<dbReference type="OrthoDB" id="20900at2759"/>
<dbReference type="BioCyc" id="YEAST:G3O-31225-MONOMER"/>
<dbReference type="Reactome" id="R-SCE-6791226">
    <property type="pathway name" value="Major pathway of rRNA processing in the nucleolus and cytosol"/>
</dbReference>
<dbReference type="BioGRID-ORCS" id="856604">
    <property type="hits" value="1 hit in 10 CRISPR screens"/>
</dbReference>
<dbReference type="PRO" id="PR:P38883"/>
<dbReference type="Proteomes" id="UP000002311">
    <property type="component" value="Chromosome VIII"/>
</dbReference>
<dbReference type="RNAct" id="P38883">
    <property type="molecule type" value="protein"/>
</dbReference>
<dbReference type="GO" id="GO:0005829">
    <property type="term" value="C:cytosol"/>
    <property type="evidence" value="ECO:0000314"/>
    <property type="project" value="SGD"/>
</dbReference>
<dbReference type="GO" id="GO:0005654">
    <property type="term" value="C:nucleoplasm"/>
    <property type="evidence" value="ECO:0000314"/>
    <property type="project" value="SGD"/>
</dbReference>
<dbReference type="GO" id="GO:0005634">
    <property type="term" value="C:nucleus"/>
    <property type="evidence" value="ECO:0000314"/>
    <property type="project" value="SGD"/>
</dbReference>
<dbReference type="GO" id="GO:0120330">
    <property type="term" value="C:rixosome complex"/>
    <property type="evidence" value="ECO:0000314"/>
    <property type="project" value="SGD"/>
</dbReference>
<dbReference type="GO" id="GO:0003682">
    <property type="term" value="F:chromatin binding"/>
    <property type="evidence" value="ECO:0000314"/>
    <property type="project" value="SGD"/>
</dbReference>
<dbReference type="GO" id="GO:0006267">
    <property type="term" value="P:pre-replicative complex assembly involved in nuclear cell cycle DNA replication"/>
    <property type="evidence" value="ECO:0000315"/>
    <property type="project" value="SGD"/>
</dbReference>
<dbReference type="GO" id="GO:0030174">
    <property type="term" value="P:regulation of DNA-templated DNA replication initiation"/>
    <property type="evidence" value="ECO:0000315"/>
    <property type="project" value="SGD"/>
</dbReference>
<dbReference type="GO" id="GO:0000027">
    <property type="term" value="P:ribosomal large subunit assembly"/>
    <property type="evidence" value="ECO:0000315"/>
    <property type="project" value="SGD"/>
</dbReference>
<dbReference type="GO" id="GO:0006364">
    <property type="term" value="P:rRNA processing"/>
    <property type="evidence" value="ECO:0000315"/>
    <property type="project" value="SGD"/>
</dbReference>
<dbReference type="InterPro" id="IPR012583">
    <property type="entry name" value="RIX1_N"/>
</dbReference>
<dbReference type="PANTHER" id="PTHR34105">
    <property type="entry name" value="PROLINE-, GLUTAMIC ACID- AND LEUCINE-RICH PROTEIN 1"/>
    <property type="match status" value="1"/>
</dbReference>
<dbReference type="PANTHER" id="PTHR34105:SF1">
    <property type="entry name" value="PROLINE-, GLUTAMIC ACID- AND LEUCINE-RICH PROTEIN 1"/>
    <property type="match status" value="1"/>
</dbReference>
<dbReference type="Pfam" id="PF08167">
    <property type="entry name" value="RIX1"/>
    <property type="match status" value="1"/>
</dbReference>
<feature type="initiator methionine" description="Removed" evidence="13">
    <location>
        <position position="1"/>
    </location>
</feature>
<feature type="chain" id="PRO_0000202938" description="Pre-rRNA-processing protein RIX1">
    <location>
        <begin position="2"/>
        <end position="763"/>
    </location>
</feature>
<feature type="region of interest" description="Interaction with IPI3" evidence="11">
    <location>
        <begin position="2"/>
        <end position="233"/>
    </location>
</feature>
<feature type="region of interest" description="Interaction with MDN1" evidence="11">
    <location>
        <begin position="663"/>
        <end position="763"/>
    </location>
</feature>
<feature type="region of interest" description="Disordered" evidence="1">
    <location>
        <begin position="722"/>
        <end position="763"/>
    </location>
</feature>
<feature type="compositionally biased region" description="Acidic residues" evidence="1">
    <location>
        <begin position="736"/>
        <end position="763"/>
    </location>
</feature>
<feature type="modified residue" description="N-acetylserine" evidence="13">
    <location>
        <position position="2"/>
    </location>
</feature>
<feature type="sequence conflict" description="In Ref. 1; AAB68356." evidence="12" ref="1">
    <original>E</original>
    <variation>G</variation>
    <location>
        <position position="762"/>
    </location>
</feature>
<feature type="helix" evidence="14">
    <location>
        <begin position="8"/>
        <end position="13"/>
    </location>
</feature>
<feature type="helix" evidence="14">
    <location>
        <begin position="20"/>
        <end position="29"/>
    </location>
</feature>
<feature type="helix" evidence="14">
    <location>
        <begin position="33"/>
        <end position="35"/>
    </location>
</feature>
<feature type="turn" evidence="14">
    <location>
        <begin position="41"/>
        <end position="44"/>
    </location>
</feature>
<feature type="helix" evidence="14">
    <location>
        <begin position="45"/>
        <end position="57"/>
    </location>
</feature>
<feature type="strand" evidence="14">
    <location>
        <begin position="60"/>
        <end position="62"/>
    </location>
</feature>
<feature type="helix" evidence="14">
    <location>
        <begin position="63"/>
        <end position="77"/>
    </location>
</feature>
<feature type="helix" evidence="14">
    <location>
        <begin position="79"/>
        <end position="102"/>
    </location>
</feature>
<feature type="turn" evidence="14">
    <location>
        <begin position="105"/>
        <end position="107"/>
    </location>
</feature>
<feature type="strand" evidence="14">
    <location>
        <begin position="108"/>
        <end position="112"/>
    </location>
</feature>
<feature type="helix" evidence="14">
    <location>
        <begin position="113"/>
        <end position="128"/>
    </location>
</feature>
<feature type="turn" evidence="14">
    <location>
        <begin position="129"/>
        <end position="132"/>
    </location>
</feature>
<feature type="helix" evidence="14">
    <location>
        <begin position="135"/>
        <end position="138"/>
    </location>
</feature>
<feature type="turn" evidence="14">
    <location>
        <begin position="139"/>
        <end position="142"/>
    </location>
</feature>
<feature type="helix" evidence="14">
    <location>
        <begin position="143"/>
        <end position="157"/>
    </location>
</feature>
<feature type="helix" evidence="14">
    <location>
        <begin position="161"/>
        <end position="174"/>
    </location>
</feature>
<feature type="strand" evidence="14">
    <location>
        <begin position="176"/>
        <end position="179"/>
    </location>
</feature>
<feature type="helix" evidence="14">
    <location>
        <begin position="180"/>
        <end position="182"/>
    </location>
</feature>
<feature type="helix" evidence="14">
    <location>
        <begin position="183"/>
        <end position="194"/>
    </location>
</feature>
<feature type="strand" evidence="14">
    <location>
        <begin position="198"/>
        <end position="201"/>
    </location>
</feature>
<feature type="helix" evidence="14">
    <location>
        <begin position="203"/>
        <end position="215"/>
    </location>
</feature>
<feature type="helix" evidence="14">
    <location>
        <begin position="216"/>
        <end position="218"/>
    </location>
</feature>
<feature type="helix" evidence="14">
    <location>
        <begin position="242"/>
        <end position="252"/>
    </location>
</feature>
<feature type="helix" evidence="14">
    <location>
        <begin position="255"/>
        <end position="265"/>
    </location>
</feature>
<feature type="strand" evidence="14">
    <location>
        <begin position="268"/>
        <end position="270"/>
    </location>
</feature>
<feature type="helix" evidence="14">
    <location>
        <begin position="271"/>
        <end position="277"/>
    </location>
</feature>
<feature type="strand" evidence="14">
    <location>
        <begin position="288"/>
        <end position="290"/>
    </location>
</feature>
<feature type="strand" evidence="14">
    <location>
        <begin position="300"/>
        <end position="302"/>
    </location>
</feature>
<feature type="helix" evidence="14">
    <location>
        <begin position="303"/>
        <end position="308"/>
    </location>
</feature>
<feature type="helix" evidence="14">
    <location>
        <begin position="310"/>
        <end position="325"/>
    </location>
</feature>
<feature type="strand" evidence="14">
    <location>
        <begin position="332"/>
        <end position="335"/>
    </location>
</feature>
<feature type="helix" evidence="14">
    <location>
        <begin position="336"/>
        <end position="346"/>
    </location>
</feature>
<feature type="strand" evidence="14">
    <location>
        <begin position="352"/>
        <end position="354"/>
    </location>
</feature>
<feature type="strand" evidence="14">
    <location>
        <begin position="358"/>
        <end position="360"/>
    </location>
</feature>
<feature type="helix" evidence="14">
    <location>
        <begin position="365"/>
        <end position="390"/>
    </location>
</feature>
<feature type="turn" evidence="14">
    <location>
        <begin position="391"/>
        <end position="396"/>
    </location>
</feature>
<feature type="helix" evidence="14">
    <location>
        <begin position="397"/>
        <end position="399"/>
    </location>
</feature>
<feature type="helix" evidence="14">
    <location>
        <begin position="402"/>
        <end position="410"/>
    </location>
</feature>
<feature type="strand" evidence="14">
    <location>
        <begin position="415"/>
        <end position="417"/>
    </location>
</feature>
<feature type="helix" evidence="14">
    <location>
        <begin position="423"/>
        <end position="426"/>
    </location>
</feature>
<feature type="helix" evidence="14">
    <location>
        <begin position="431"/>
        <end position="447"/>
    </location>
</feature>
<feature type="helix" evidence="14">
    <location>
        <begin position="455"/>
        <end position="467"/>
    </location>
</feature>
<feature type="strand" evidence="14">
    <location>
        <begin position="471"/>
        <end position="473"/>
    </location>
</feature>
<feature type="strand" evidence="14">
    <location>
        <begin position="511"/>
        <end position="516"/>
    </location>
</feature>
<feature type="helix" evidence="14">
    <location>
        <begin position="520"/>
        <end position="535"/>
    </location>
</feature>
<feature type="helix" evidence="14">
    <location>
        <begin position="542"/>
        <end position="561"/>
    </location>
</feature>
<feature type="strand" evidence="14">
    <location>
        <begin position="562"/>
        <end position="564"/>
    </location>
</feature>
<feature type="helix" evidence="14">
    <location>
        <begin position="567"/>
        <end position="578"/>
    </location>
</feature>
<feature type="helix" evidence="14">
    <location>
        <begin position="588"/>
        <end position="594"/>
    </location>
</feature>
<feature type="strand" evidence="14">
    <location>
        <begin position="595"/>
        <end position="598"/>
    </location>
</feature>
<feature type="helix" evidence="14">
    <location>
        <begin position="602"/>
        <end position="607"/>
    </location>
</feature>
<protein>
    <recommendedName>
        <fullName>Pre-rRNA-processing protein RIX1</fullName>
    </recommendedName>
    <alternativeName>
        <fullName>Involved in processing IST2 protein 2</fullName>
    </alternativeName>
    <alternativeName>
        <fullName>Ribosomal export protein 1</fullName>
    </alternativeName>
</protein>
<sequence>MSEEFIAVSTLARNLEIAKGNEFHTILATLRSPVYINEQLLKSELSFLVTKILKLIRSGNDFDLWKGCHTSVVTCAYNPLVLSTHGGQLLAAIYSRLEQKTGFYSSVISSSHGKQLFNTLISSVAIIIDLMKNKPTLSREALVPKLKAIIPTLITLSQYEPELVLPVLQRILKRNTTTFKPFTNKFRTVLINLIISDYASLGTKTQRLVCENFAYLHLLKIQVSDTSDDETQAHHKIYADSNWRTGLMSILSQFKPIIQLCGEILDFEQDNELYKLIKSLPVIDESNNKEEFLPSLKLDFNAPLTLWEIPQRLSLLADMLVAFISLPTPFPIRVPLGGINSLCEVLLGVSNKYLPLKKELRHDNELNGVINTILPQIQFQGIRLWEIMVSKYGKCGLSFFEGILSSIELFIPLKKKSNNEIDFNVVGSLKFEFATVFRLVNMILSHLGHQLNIISVISQLIEVALFLSHDKTLIDSLFKNRKSIMKQQTKTKQSKRSKSAEGAFSDIYTHPELFVCKNSMNWFNEINDFFITALNNWILPSTPHIQILKYSITQSLRLKERFGYIPESFVNLLRCEVLHPGSERVSILPIAISLLKNINDDMFELLCHPKVPVGMVYQLHKPLDLGEDGEVRDDINKKEVETNESSSNANTGLETLKALENLENVTIPEPKHEVPKVVDDTAIFKKRSVEEVIERESTSSHKKVKFVEETTVDNGEELIVKKAVSQTKEEEKPMEDSEDEEQEEFEIPAIELSDDEEEEEEEE</sequence>
<keyword id="KW-0002">3D-structure</keyword>
<keyword id="KW-0007">Acetylation</keyword>
<keyword id="KW-0539">Nucleus</keyword>
<keyword id="KW-1185">Reference proteome</keyword>
<keyword id="KW-0690">Ribosome biogenesis</keyword>
<keyword id="KW-0698">rRNA processing</keyword>
<keyword id="KW-0832">Ubl conjugation</keyword>
<gene>
    <name type="primary">RIX1</name>
    <name type="synonym">IPI2</name>
    <name type="ordered locus">YHR197W</name>
</gene>
<accession>P38883</accession>
<accession>D3DLE5</accession>